<keyword id="KW-0012">Acyltransferase</keyword>
<keyword id="KW-0449">Lipoprotein</keyword>
<keyword id="KW-0472">Membrane</keyword>
<keyword id="KW-0564">Palmitate</keyword>
<keyword id="KW-1185">Reference proteome</keyword>
<keyword id="KW-0808">Transferase</keyword>
<keyword id="KW-0812">Transmembrane</keyword>
<keyword id="KW-1133">Transmembrane helix</keyword>
<gene>
    <name type="primary">Zdhhc24</name>
</gene>
<dbReference type="EC" id="2.3.1.225" evidence="4"/>
<dbReference type="EMBL" id="AY886540">
    <property type="protein sequence ID" value="AAX73402.1"/>
    <property type="molecule type" value="mRNA"/>
</dbReference>
<dbReference type="RefSeq" id="NP_001034189.1">
    <property type="nucleotide sequence ID" value="NM_001039100.1"/>
</dbReference>
<dbReference type="SMR" id="Q2TGI5"/>
<dbReference type="FunCoup" id="Q2TGI5">
    <property type="interactions" value="1359"/>
</dbReference>
<dbReference type="STRING" id="10116.ENSRNOP00000026832"/>
<dbReference type="PhosphoSitePlus" id="Q2TGI5"/>
<dbReference type="PaxDb" id="10116-ENSRNOP00000026832"/>
<dbReference type="Ensembl" id="ENSRNOT00000026832.6">
    <property type="protein sequence ID" value="ENSRNOP00000026832.4"/>
    <property type="gene ID" value="ENSRNOG00000019825.6"/>
</dbReference>
<dbReference type="GeneID" id="293665"/>
<dbReference type="KEGG" id="rno:293665"/>
<dbReference type="UCSC" id="RGD:1565630">
    <property type="organism name" value="rat"/>
</dbReference>
<dbReference type="AGR" id="RGD:1565630"/>
<dbReference type="CTD" id="254359"/>
<dbReference type="RGD" id="1565630">
    <property type="gene designation" value="Zdhhc24"/>
</dbReference>
<dbReference type="eggNOG" id="KOG1311">
    <property type="taxonomic scope" value="Eukaryota"/>
</dbReference>
<dbReference type="GeneTree" id="ENSGT00940000162361"/>
<dbReference type="HOGENOM" id="CLU_027721_5_2_1"/>
<dbReference type="InParanoid" id="Q2TGI5"/>
<dbReference type="OMA" id="MGWISAS"/>
<dbReference type="OrthoDB" id="302728at2759"/>
<dbReference type="PhylomeDB" id="Q2TGI5"/>
<dbReference type="TreeFam" id="TF319523"/>
<dbReference type="PRO" id="PR:Q2TGI5"/>
<dbReference type="Proteomes" id="UP000002494">
    <property type="component" value="Chromosome 1"/>
</dbReference>
<dbReference type="Bgee" id="ENSRNOG00000019825">
    <property type="expression patterns" value="Expressed in thymus and 20 other cell types or tissues"/>
</dbReference>
<dbReference type="GO" id="GO:0005783">
    <property type="term" value="C:endoplasmic reticulum"/>
    <property type="evidence" value="ECO:0000318"/>
    <property type="project" value="GO_Central"/>
</dbReference>
<dbReference type="GO" id="GO:0005794">
    <property type="term" value="C:Golgi apparatus"/>
    <property type="evidence" value="ECO:0000318"/>
    <property type="project" value="GO_Central"/>
</dbReference>
<dbReference type="GO" id="GO:0016020">
    <property type="term" value="C:membrane"/>
    <property type="evidence" value="ECO:0007669"/>
    <property type="project" value="UniProtKB-SubCell"/>
</dbReference>
<dbReference type="GO" id="GO:0019706">
    <property type="term" value="F:protein-cysteine S-palmitoyltransferase activity"/>
    <property type="evidence" value="ECO:0000318"/>
    <property type="project" value="GO_Central"/>
</dbReference>
<dbReference type="GO" id="GO:0006612">
    <property type="term" value="P:protein targeting to membrane"/>
    <property type="evidence" value="ECO:0000318"/>
    <property type="project" value="GO_Central"/>
</dbReference>
<dbReference type="InterPro" id="IPR001594">
    <property type="entry name" value="Palmitoyltrfase_DHHC"/>
</dbReference>
<dbReference type="InterPro" id="IPR039859">
    <property type="entry name" value="PFA4/ZDH16/20/ERF2-like"/>
</dbReference>
<dbReference type="PANTHER" id="PTHR22883:SF414">
    <property type="entry name" value="PALMITOYLTRANSFERASE ZDHHC24-RELATED"/>
    <property type="match status" value="1"/>
</dbReference>
<dbReference type="PANTHER" id="PTHR22883">
    <property type="entry name" value="ZINC FINGER DHHC DOMAIN CONTAINING PROTEIN"/>
    <property type="match status" value="1"/>
</dbReference>
<dbReference type="Pfam" id="PF01529">
    <property type="entry name" value="DHHC"/>
    <property type="match status" value="1"/>
</dbReference>
<dbReference type="PROSITE" id="PS50216">
    <property type="entry name" value="DHHC"/>
    <property type="match status" value="1"/>
</dbReference>
<proteinExistence type="evidence at transcript level"/>
<organism>
    <name type="scientific">Rattus norvegicus</name>
    <name type="common">Rat</name>
    <dbReference type="NCBI Taxonomy" id="10116"/>
    <lineage>
        <taxon>Eukaryota</taxon>
        <taxon>Metazoa</taxon>
        <taxon>Chordata</taxon>
        <taxon>Craniata</taxon>
        <taxon>Vertebrata</taxon>
        <taxon>Euteleostomi</taxon>
        <taxon>Mammalia</taxon>
        <taxon>Eutheria</taxon>
        <taxon>Euarchontoglires</taxon>
        <taxon>Glires</taxon>
        <taxon>Rodentia</taxon>
        <taxon>Myomorpha</taxon>
        <taxon>Muroidea</taxon>
        <taxon>Muridae</taxon>
        <taxon>Murinae</taxon>
        <taxon>Rattus</taxon>
    </lineage>
</organism>
<protein>
    <recommendedName>
        <fullName evidence="4">Probable palmitoyltransferase ZDHHC24</fullName>
        <ecNumber evidence="4">2.3.1.225</ecNumber>
    </recommendedName>
    <alternativeName>
        <fullName>Membrane-associated zinc finger protein DHHC25</fullName>
    </alternativeName>
    <alternativeName>
        <fullName>Zinc finger DHHC domain-containing protein 24</fullName>
        <shortName>DHHC-24</shortName>
    </alternativeName>
</protein>
<feature type="chain" id="PRO_0000233712" description="Probable palmitoyltransferase ZDHHC24">
    <location>
        <begin position="1"/>
        <end position="284"/>
    </location>
</feature>
<feature type="topological domain" description="Cytoplasmic" evidence="4">
    <location>
        <begin position="1"/>
        <end position="18"/>
    </location>
</feature>
<feature type="transmembrane region" description="Helical" evidence="2">
    <location>
        <begin position="19"/>
        <end position="39"/>
    </location>
</feature>
<feature type="topological domain" description="Extracellular" evidence="4">
    <location>
        <begin position="40"/>
        <end position="52"/>
    </location>
</feature>
<feature type="transmembrane region" description="Helical" evidence="2">
    <location>
        <begin position="53"/>
        <end position="73"/>
    </location>
</feature>
<feature type="topological domain" description="Cytoplasmic" evidence="4">
    <location>
        <begin position="74"/>
        <end position="137"/>
    </location>
</feature>
<feature type="transmembrane region" description="Helical" evidence="2">
    <location>
        <begin position="138"/>
        <end position="158"/>
    </location>
</feature>
<feature type="topological domain" description="Extracellular" evidence="4">
    <location>
        <begin position="159"/>
        <end position="166"/>
    </location>
</feature>
<feature type="transmembrane region" description="Helical" evidence="2">
    <location>
        <begin position="167"/>
        <end position="187"/>
    </location>
</feature>
<feature type="topological domain" description="Cytoplasmic" evidence="4">
    <location>
        <begin position="188"/>
        <end position="195"/>
    </location>
</feature>
<feature type="transmembrane region" description="Helical" evidence="2">
    <location>
        <begin position="196"/>
        <end position="216"/>
    </location>
</feature>
<feature type="topological domain" description="Extracellular" evidence="4">
    <location>
        <begin position="217"/>
        <end position="284"/>
    </location>
</feature>
<feature type="domain" description="DHHC" evidence="3">
    <location>
        <begin position="94"/>
        <end position="144"/>
    </location>
</feature>
<feature type="active site" description="S-palmitoyl cysteine intermediate" evidence="3">
    <location>
        <position position="124"/>
    </location>
</feature>
<name>ZDH24_RAT</name>
<accession>Q2TGI5</accession>
<comment type="function">
    <text evidence="4">Probable palmitoyltransferase that could catalyze the addition of palmitate onto various protein substrates.</text>
</comment>
<comment type="catalytic activity">
    <reaction evidence="4">
        <text>L-cysteinyl-[protein] + hexadecanoyl-CoA = S-hexadecanoyl-L-cysteinyl-[protein] + CoA</text>
        <dbReference type="Rhea" id="RHEA:36683"/>
        <dbReference type="Rhea" id="RHEA-COMP:10131"/>
        <dbReference type="Rhea" id="RHEA-COMP:11032"/>
        <dbReference type="ChEBI" id="CHEBI:29950"/>
        <dbReference type="ChEBI" id="CHEBI:57287"/>
        <dbReference type="ChEBI" id="CHEBI:57379"/>
        <dbReference type="ChEBI" id="CHEBI:74151"/>
        <dbReference type="EC" id="2.3.1.225"/>
    </reaction>
    <physiologicalReaction direction="left-to-right" evidence="4">
        <dbReference type="Rhea" id="RHEA:36684"/>
    </physiologicalReaction>
</comment>
<comment type="subcellular location">
    <subcellularLocation>
        <location evidence="2">Membrane</location>
        <topology evidence="2">Multi-pass membrane protein</topology>
    </subcellularLocation>
</comment>
<comment type="domain">
    <text evidence="1">The DHHC domain is required for palmitoyltransferase activity.</text>
</comment>
<comment type="similarity">
    <text evidence="4">Belongs to the DHHC palmitoyltransferase family.</text>
</comment>
<sequence length="284" mass="30696">MGEPWAARGTEGAPARMPVVFTALWAAVVVLELTYVMVLGPGPPPLEPLARALQLALAAYQLLNLLGNMGLFLRSDPSIRGVMLAGRGLGQGWAYCYQCQSQVPPRSGHCSACRVCILRRDHHCRLLGRCVGFHNYRPFLCLLLHAAGVLLHISVLLSPALSALLQAHSALYTVALLLLPWLMLLTGKVSLAQFALAFVVDTCVAGALLCGAGLLFHGMLLLRGQTTWEWARGQHSYDLGMSHNLQAALGPRWALVWFWPFLASPLPGDGITFQTPTDVGLVTS</sequence>
<reference key="1">
    <citation type="submission" date="2005-01" db="EMBL/GenBank/DDBJ databases">
        <title>A superfamily of membrane-associated DHHC type zinc finger proteins.</title>
        <authorList>
            <person name="Huang C.-H."/>
            <person name="Chen Y."/>
            <person name="Ye T."/>
        </authorList>
    </citation>
    <scope>NUCLEOTIDE SEQUENCE [MRNA]</scope>
</reference>
<evidence type="ECO:0000250" key="1">
    <source>
        <dbReference type="UniProtKB" id="Q8IUH5"/>
    </source>
</evidence>
<evidence type="ECO:0000255" key="2"/>
<evidence type="ECO:0000255" key="3">
    <source>
        <dbReference type="PROSITE-ProRule" id="PRU00067"/>
    </source>
</evidence>
<evidence type="ECO:0000305" key="4"/>